<sequence length="760" mass="83603">MAAMFNHPWPNLTLIYFFFIVVLPFQSLSQFDSPQNIETFFPISSLSPVPPPLLPPSSNPSPPSNNSSSSDKKTITKAVLITAASTLLVAGVFFFCLQRCIIARRRRDRVGPVRVENTLPPYPPPPMTSAAVTTTTLAREGFTRFGGVKGLILDENGLDVLYWRKLQSQRERSGSFRKQIVTGEEEDEKEVIYYKNKKKTEPVTEIPLLRGRSSTSHSVIHNEDHQPPPQVKQSEPTPPPPPPSIAVKQSAPTPSPPPPIKKGSSPSPPPPPPVKKVGALSSSASKPPPAPVRGASGGETSKQVKLKPLHWDKVNPDSDHSMVWDKIDRGSFSFDGDLMEALFGYVAVGKKSPEQGDEKNPKSTQIFILDPRKSQNTAIVLKSLGMTREELVESLIEGNDFVPDTLERLARIAPTKEEQSAILEFDGDTAKLADAETFLFHLLKSVPTAFTRLNAFLFRANYYPEMAHHSKCLQTLDLACKELRSRGLFVKLLEAILKAGNRMNAGTARGNAQAFNLTALLKLSDVKSVDGKTSLLNFVVEEVVRSEGKRCVMNRRSHSLTRSGSSNYNGGNSSLQVMSKEEQEKEYLKLGLPVVGGLSSEFSNVKKAACVDYETVVATCSALAVRAKDAKTVIGECEDGEGGRFVKTMMTFLDSVEEEVKIAKGEERKVMELVKRTTDYYQAGAVTKGKNPLHLFVIVRDFLAMVDKVCLDIMRNMQRRKVGSPISPSSQRNAVKFPVLPPNFMSDRAWSDSGGSDSDM</sequence>
<keyword id="KW-1003">Cell membrane</keyword>
<keyword id="KW-0472">Membrane</keyword>
<keyword id="KW-1185">Reference proteome</keyword>
<keyword id="KW-0732">Signal</keyword>
<keyword id="KW-0812">Transmembrane</keyword>
<keyword id="KW-1133">Transmembrane helix</keyword>
<organism>
    <name type="scientific">Arabidopsis thaliana</name>
    <name type="common">Mouse-ear cress</name>
    <dbReference type="NCBI Taxonomy" id="3702"/>
    <lineage>
        <taxon>Eukaryota</taxon>
        <taxon>Viridiplantae</taxon>
        <taxon>Streptophyta</taxon>
        <taxon>Embryophyta</taxon>
        <taxon>Tracheophyta</taxon>
        <taxon>Spermatophyta</taxon>
        <taxon>Magnoliopsida</taxon>
        <taxon>eudicotyledons</taxon>
        <taxon>Gunneridae</taxon>
        <taxon>Pentapetalae</taxon>
        <taxon>rosids</taxon>
        <taxon>malvids</taxon>
        <taxon>Brassicales</taxon>
        <taxon>Brassicaceae</taxon>
        <taxon>Camelineae</taxon>
        <taxon>Arabidopsis</taxon>
    </lineage>
</organism>
<feature type="signal peptide" evidence="1">
    <location>
        <begin position="1"/>
        <end position="29"/>
    </location>
</feature>
<feature type="chain" id="PRO_0000308533" description="Formin-like protein 8">
    <location>
        <begin position="30"/>
        <end position="760"/>
    </location>
</feature>
<feature type="transmembrane region" description="Helical" evidence="1">
    <location>
        <begin position="78"/>
        <end position="98"/>
    </location>
</feature>
<feature type="domain" description="FH2" evidence="2">
    <location>
        <begin position="296"/>
        <end position="732"/>
    </location>
</feature>
<feature type="region of interest" description="Disordered" evidence="3">
    <location>
        <begin position="52"/>
        <end position="71"/>
    </location>
</feature>
<feature type="region of interest" description="Disordered" evidence="3">
    <location>
        <begin position="204"/>
        <end position="313"/>
    </location>
</feature>
<feature type="compositionally biased region" description="Pro residues" evidence="3">
    <location>
        <begin position="52"/>
        <end position="63"/>
    </location>
</feature>
<feature type="compositionally biased region" description="Pro residues" evidence="3">
    <location>
        <begin position="253"/>
        <end position="274"/>
    </location>
</feature>
<proteinExistence type="evidence at protein level"/>
<reference key="1">
    <citation type="journal article" date="2000" name="Nature">
        <title>Sequence and analysis of chromosome 1 of the plant Arabidopsis thaliana.</title>
        <authorList>
            <person name="Theologis A."/>
            <person name="Ecker J.R."/>
            <person name="Palm C.J."/>
            <person name="Federspiel N.A."/>
            <person name="Kaul S."/>
            <person name="White O."/>
            <person name="Alonso J."/>
            <person name="Altafi H."/>
            <person name="Araujo R."/>
            <person name="Bowman C.L."/>
            <person name="Brooks S.Y."/>
            <person name="Buehler E."/>
            <person name="Chan A."/>
            <person name="Chao Q."/>
            <person name="Chen H."/>
            <person name="Cheuk R.F."/>
            <person name="Chin C.W."/>
            <person name="Chung M.K."/>
            <person name="Conn L."/>
            <person name="Conway A.B."/>
            <person name="Conway A.R."/>
            <person name="Creasy T.H."/>
            <person name="Dewar K."/>
            <person name="Dunn P."/>
            <person name="Etgu P."/>
            <person name="Feldblyum T.V."/>
            <person name="Feng J.-D."/>
            <person name="Fong B."/>
            <person name="Fujii C.Y."/>
            <person name="Gill J.E."/>
            <person name="Goldsmith A.D."/>
            <person name="Haas B."/>
            <person name="Hansen N.F."/>
            <person name="Hughes B."/>
            <person name="Huizar L."/>
            <person name="Hunter J.L."/>
            <person name="Jenkins J."/>
            <person name="Johnson-Hopson C."/>
            <person name="Khan S."/>
            <person name="Khaykin E."/>
            <person name="Kim C.J."/>
            <person name="Koo H.L."/>
            <person name="Kremenetskaia I."/>
            <person name="Kurtz D.B."/>
            <person name="Kwan A."/>
            <person name="Lam B."/>
            <person name="Langin-Hooper S."/>
            <person name="Lee A."/>
            <person name="Lee J.M."/>
            <person name="Lenz C.A."/>
            <person name="Li J.H."/>
            <person name="Li Y.-P."/>
            <person name="Lin X."/>
            <person name="Liu S.X."/>
            <person name="Liu Z.A."/>
            <person name="Luros J.S."/>
            <person name="Maiti R."/>
            <person name="Marziali A."/>
            <person name="Militscher J."/>
            <person name="Miranda M."/>
            <person name="Nguyen M."/>
            <person name="Nierman W.C."/>
            <person name="Osborne B.I."/>
            <person name="Pai G."/>
            <person name="Peterson J."/>
            <person name="Pham P.K."/>
            <person name="Rizzo M."/>
            <person name="Rooney T."/>
            <person name="Rowley D."/>
            <person name="Sakano H."/>
            <person name="Salzberg S.L."/>
            <person name="Schwartz J.R."/>
            <person name="Shinn P."/>
            <person name="Southwick A.M."/>
            <person name="Sun H."/>
            <person name="Tallon L.J."/>
            <person name="Tambunga G."/>
            <person name="Toriumi M.J."/>
            <person name="Town C.D."/>
            <person name="Utterback T."/>
            <person name="Van Aken S."/>
            <person name="Vaysberg M."/>
            <person name="Vysotskaia V.S."/>
            <person name="Walker M."/>
            <person name="Wu D."/>
            <person name="Yu G."/>
            <person name="Fraser C.M."/>
            <person name="Venter J.C."/>
            <person name="Davis R.W."/>
        </authorList>
    </citation>
    <scope>NUCLEOTIDE SEQUENCE [LARGE SCALE GENOMIC DNA]</scope>
    <source>
        <strain>cv. Columbia</strain>
    </source>
</reference>
<reference key="2">
    <citation type="journal article" date="2017" name="Plant J.">
        <title>Araport11: a complete reannotation of the Arabidopsis thaliana reference genome.</title>
        <authorList>
            <person name="Cheng C.Y."/>
            <person name="Krishnakumar V."/>
            <person name="Chan A.P."/>
            <person name="Thibaud-Nissen F."/>
            <person name="Schobel S."/>
            <person name="Town C.D."/>
        </authorList>
    </citation>
    <scope>GENOME REANNOTATION</scope>
    <source>
        <strain>cv. Columbia</strain>
    </source>
</reference>
<reference key="3">
    <citation type="journal article" date="2000" name="Genome Biol.">
        <title>Are plant formins integral membrane proteins?</title>
        <authorList>
            <person name="Cvrckova F."/>
        </authorList>
    </citation>
    <scope>GENE FAMILY ORGANIZATION</scope>
</reference>
<reference key="4">
    <citation type="journal article" date="2002" name="Trends Plant Sci.">
        <title>Formins: intermediates in signal-transduction cascades that affect cytoskeletal reorganization.</title>
        <authorList>
            <person name="Deeks M.J."/>
            <person name="Hussey P.J."/>
            <person name="Davies B."/>
        </authorList>
    </citation>
    <scope>GENE FAMILY ORGANIZATION</scope>
    <scope>NOMENCLATURE</scope>
</reference>
<reference key="5">
    <citation type="journal article" date="2004" name="BMC Genomics">
        <title>Formin homology 2 domains occur in multiple contexts in angiosperms.</title>
        <authorList>
            <person name="Cvrckova F."/>
            <person name="Novotny M."/>
            <person name="Pickova D."/>
            <person name="Zarsky V."/>
        </authorList>
    </citation>
    <scope>GENE FAMILY ORGANIZATION</scope>
    <scope>NOMENCLATURE</scope>
</reference>
<reference key="6">
    <citation type="journal article" date="2005" name="New Phytol.">
        <title>Arabidopsis group Ie formins localize to specific cell membrane domains, interact with actin-binding proteins and cause defects in cell expansion upon aberrant expression.</title>
        <authorList>
            <person name="Deeks M.J."/>
            <person name="Cvrckova F."/>
            <person name="Machesky L.M."/>
            <person name="Mikitova V."/>
            <person name="Ketelaar T."/>
            <person name="Zarsky V."/>
            <person name="Davies B."/>
            <person name="Hussey P.J."/>
        </authorList>
    </citation>
    <scope>FUNCTION</scope>
    <scope>SUBCELLULAR LOCATION</scope>
</reference>
<reference key="7">
    <citation type="journal article" date="2005" name="Plant Physiol.">
        <title>Cloning and functional characterization of a formin-like protein (AtFH8) from Arabidopsis.</title>
        <authorList>
            <person name="Yi K."/>
            <person name="Guo C."/>
            <person name="Chen D."/>
            <person name="Zhao B."/>
            <person name="Yang B."/>
            <person name="Ren H."/>
        </authorList>
    </citation>
    <scope>FUNCTION</scope>
    <scope>SUBUNIT</scope>
</reference>
<comment type="function">
    <text evidence="4 5">Might be involved in the organization and polarity of the actin cytoskeleton. Interacts with the barbed end of actin filaments and nucleates actin-filament polymerization in vitro.</text>
</comment>
<comment type="subunit">
    <text evidence="4">Interacts with profilin.</text>
</comment>
<comment type="subcellular location">
    <subcellularLocation>
        <location evidence="5">Cell membrane</location>
        <topology evidence="5">Single-pass membrane protein</topology>
    </subcellularLocation>
</comment>
<comment type="similarity">
    <text evidence="6">Belongs to the formin-like family. Class-I subfamily.</text>
</comment>
<accession>O04532</accession>
<gene>
    <name type="primary">FH8</name>
    <name type="ordered locus">At1g70140</name>
    <name type="ORF">F20P5.14</name>
</gene>
<evidence type="ECO:0000255" key="1"/>
<evidence type="ECO:0000255" key="2">
    <source>
        <dbReference type="PROSITE-ProRule" id="PRU00774"/>
    </source>
</evidence>
<evidence type="ECO:0000256" key="3">
    <source>
        <dbReference type="SAM" id="MobiDB-lite"/>
    </source>
</evidence>
<evidence type="ECO:0000269" key="4">
    <source>
    </source>
</evidence>
<evidence type="ECO:0000269" key="5">
    <source>
    </source>
</evidence>
<evidence type="ECO:0000305" key="6"/>
<protein>
    <recommendedName>
        <fullName>Formin-like protein 8</fullName>
        <shortName>AtFH8</shortName>
        <shortName>AtFORMIN-1</shortName>
    </recommendedName>
</protein>
<name>FH8_ARATH</name>
<dbReference type="EMBL" id="AC002062">
    <property type="protein sequence ID" value="AAB61101.1"/>
    <property type="molecule type" value="Genomic_DNA"/>
</dbReference>
<dbReference type="EMBL" id="CP002684">
    <property type="protein sequence ID" value="AEE35024.1"/>
    <property type="molecule type" value="Genomic_DNA"/>
</dbReference>
<dbReference type="PIR" id="B96724">
    <property type="entry name" value="B96724"/>
</dbReference>
<dbReference type="RefSeq" id="NP_177171.1">
    <property type="nucleotide sequence ID" value="NM_105682.3"/>
</dbReference>
<dbReference type="SMR" id="O04532"/>
<dbReference type="BioGRID" id="28571">
    <property type="interactions" value="1"/>
</dbReference>
<dbReference type="FunCoup" id="O04532">
    <property type="interactions" value="33"/>
</dbReference>
<dbReference type="STRING" id="3702.O04532"/>
<dbReference type="GlyGen" id="O04532">
    <property type="glycosylation" value="2 sites"/>
</dbReference>
<dbReference type="iPTMnet" id="O04532"/>
<dbReference type="PaxDb" id="3702-AT1G70140.1"/>
<dbReference type="ProteomicsDB" id="230778"/>
<dbReference type="EnsemblPlants" id="AT1G70140.1">
    <property type="protein sequence ID" value="AT1G70140.1"/>
    <property type="gene ID" value="AT1G70140"/>
</dbReference>
<dbReference type="GeneID" id="843350"/>
<dbReference type="Gramene" id="AT1G70140.1">
    <property type="protein sequence ID" value="AT1G70140.1"/>
    <property type="gene ID" value="AT1G70140"/>
</dbReference>
<dbReference type="KEGG" id="ath:AT1G70140"/>
<dbReference type="Araport" id="AT1G70140"/>
<dbReference type="TAIR" id="AT1G70140">
    <property type="gene designation" value="FH8"/>
</dbReference>
<dbReference type="eggNOG" id="KOG1922">
    <property type="taxonomic scope" value="Eukaryota"/>
</dbReference>
<dbReference type="HOGENOM" id="CLU_007699_3_0_1"/>
<dbReference type="InParanoid" id="O04532"/>
<dbReference type="OMA" id="HSVIHNE"/>
<dbReference type="PhylomeDB" id="O04532"/>
<dbReference type="PRO" id="PR:O04532"/>
<dbReference type="Proteomes" id="UP000006548">
    <property type="component" value="Chromosome 1"/>
</dbReference>
<dbReference type="ExpressionAtlas" id="O04532">
    <property type="expression patterns" value="baseline and differential"/>
</dbReference>
<dbReference type="GO" id="GO:0005886">
    <property type="term" value="C:plasma membrane"/>
    <property type="evidence" value="ECO:0007669"/>
    <property type="project" value="UniProtKB-SubCell"/>
</dbReference>
<dbReference type="GO" id="GO:0009506">
    <property type="term" value="C:plasmodesma"/>
    <property type="evidence" value="ECO:0000314"/>
    <property type="project" value="TAIR"/>
</dbReference>
<dbReference type="GO" id="GO:0003779">
    <property type="term" value="F:actin binding"/>
    <property type="evidence" value="ECO:0000250"/>
    <property type="project" value="TAIR"/>
</dbReference>
<dbReference type="GO" id="GO:0051015">
    <property type="term" value="F:actin filament binding"/>
    <property type="evidence" value="ECO:0000314"/>
    <property type="project" value="TAIR"/>
</dbReference>
<dbReference type="GO" id="GO:0005522">
    <property type="term" value="F:profilin binding"/>
    <property type="evidence" value="ECO:0000314"/>
    <property type="project" value="TAIR"/>
</dbReference>
<dbReference type="GO" id="GO:0045010">
    <property type="term" value="P:actin nucleation"/>
    <property type="evidence" value="ECO:0000314"/>
    <property type="project" value="TAIR"/>
</dbReference>
<dbReference type="GO" id="GO:0009932">
    <property type="term" value="P:cell tip growth"/>
    <property type="evidence" value="ECO:0000315"/>
    <property type="project" value="TAIR"/>
</dbReference>
<dbReference type="Gene3D" id="1.20.58.2220">
    <property type="entry name" value="Formin, FH2 domain"/>
    <property type="match status" value="1"/>
</dbReference>
<dbReference type="InterPro" id="IPR015425">
    <property type="entry name" value="FH2_Formin"/>
</dbReference>
<dbReference type="InterPro" id="IPR042201">
    <property type="entry name" value="FH2_Formin_sf"/>
</dbReference>
<dbReference type="InterPro" id="IPR027643">
    <property type="entry name" value="Formin-like_plant"/>
</dbReference>
<dbReference type="PANTHER" id="PTHR23213:SF364">
    <property type="entry name" value="FORMIN-LIKE PROTEIN 8"/>
    <property type="match status" value="1"/>
</dbReference>
<dbReference type="PANTHER" id="PTHR23213">
    <property type="entry name" value="FORMIN-RELATED"/>
    <property type="match status" value="1"/>
</dbReference>
<dbReference type="Pfam" id="PF02181">
    <property type="entry name" value="FH2"/>
    <property type="match status" value="1"/>
</dbReference>
<dbReference type="PRINTS" id="PR01217">
    <property type="entry name" value="PRICHEXTENSN"/>
</dbReference>
<dbReference type="SMART" id="SM00498">
    <property type="entry name" value="FH2"/>
    <property type="match status" value="1"/>
</dbReference>
<dbReference type="SUPFAM" id="SSF101447">
    <property type="entry name" value="Formin homology 2 domain (FH2 domain)"/>
    <property type="match status" value="1"/>
</dbReference>
<dbReference type="PROSITE" id="PS51444">
    <property type="entry name" value="FH2"/>
    <property type="match status" value="1"/>
</dbReference>